<accession>P0CV49</accession>
<evidence type="ECO:0000255" key="1"/>
<evidence type="ECO:0000256" key="2">
    <source>
        <dbReference type="SAM" id="MobiDB-lite"/>
    </source>
</evidence>
<evidence type="ECO:0000269" key="3">
    <source>
    </source>
</evidence>
<evidence type="ECO:0000303" key="4">
    <source>
    </source>
</evidence>
<evidence type="ECO:0000305" key="5"/>
<evidence type="ECO:0000305" key="6">
    <source>
    </source>
</evidence>
<organism>
    <name type="scientific">Plasmopara viticola</name>
    <name type="common">Downy mildew of grapevine</name>
    <name type="synonym">Botrytis viticola</name>
    <dbReference type="NCBI Taxonomy" id="143451"/>
    <lineage>
        <taxon>Eukaryota</taxon>
        <taxon>Sar</taxon>
        <taxon>Stramenopiles</taxon>
        <taxon>Oomycota</taxon>
        <taxon>Peronosporales</taxon>
        <taxon>Peronosporaceae</taxon>
        <taxon>Plasmopara</taxon>
    </lineage>
</organism>
<dbReference type="GO" id="GO:0005576">
    <property type="term" value="C:extracellular region"/>
    <property type="evidence" value="ECO:0007669"/>
    <property type="project" value="UniProtKB-SubCell"/>
</dbReference>
<dbReference type="GO" id="GO:0042025">
    <property type="term" value="C:host cell nucleus"/>
    <property type="evidence" value="ECO:0007669"/>
    <property type="project" value="UniProtKB-SubCell"/>
</dbReference>
<sequence>MRGAYYVITALLVVASSQTSADSGHRLHVYDHDVVAAENAAAKTLPQQSLRGSRDVPDDLAHEERAIISELVEEGAKLIPRAAENVEEMPRVTEAVGKRPRVAEKDALEKASGADEASKKPRNTATDDAFQGMSTEWELELPFKEWNTEIEPMREMPEPKWSWEKRKLVHEAFVKLCAEDLNPTVYETARLWSLFDGKAKSRPATFHRQVLIQLAKENVRRDVLIMKSVESEWDRWNEVSILSRVDVLNMLLNVHFQRWKRMYNAFGEQRSKLIAL</sequence>
<gene>
    <name evidence="4" type="primary">RXLR120</name>
</gene>
<feature type="signal peptide" evidence="1">
    <location>
        <begin position="1"/>
        <end position="21"/>
    </location>
</feature>
<feature type="chain" id="PRO_0000447958" description="Secreted RxLR effector protein 120">
    <location>
        <begin position="22"/>
        <end position="276"/>
    </location>
</feature>
<feature type="region of interest" description="Disordered" evidence="2">
    <location>
        <begin position="97"/>
        <end position="130"/>
    </location>
</feature>
<feature type="short sequence motif" description="RxLR-dEER" evidence="6">
    <location>
        <begin position="48"/>
        <end position="65"/>
    </location>
</feature>
<feature type="compositionally biased region" description="Basic and acidic residues" evidence="2">
    <location>
        <begin position="101"/>
        <end position="119"/>
    </location>
</feature>
<protein>
    <recommendedName>
        <fullName evidence="4">Secreted RxLR effector protein 120</fullName>
    </recommendedName>
</protein>
<reference key="1">
    <citation type="journal article" date="2018" name="Front. Plant Sci.">
        <title>In planta functional analysis and subcellular localization of the oomycete pathogen Plasmopara viticola candidate RXLR effector repertoire.</title>
        <authorList>
            <person name="Liu Y."/>
            <person name="Lan X."/>
            <person name="Song S."/>
            <person name="Yin L."/>
            <person name="Dry I.B."/>
            <person name="Qu J."/>
            <person name="Xiang J."/>
            <person name="Lu J."/>
        </authorList>
    </citation>
    <scope>NUCLEOTIDE SEQUENCE [MRNA]</scope>
    <scope>DOMAIN</scope>
    <scope>FUNCTION</scope>
    <scope>SUBCELLULAR LOCATION</scope>
</reference>
<name>RL120_PLAVT</name>
<keyword id="KW-1048">Host nucleus</keyword>
<keyword id="KW-0964">Secreted</keyword>
<keyword id="KW-0732">Signal</keyword>
<keyword id="KW-0843">Virulence</keyword>
<comment type="function">
    <text evidence="3">Secreted effector that completely suppresses the host cell death induced by cell death-inducing proteins.</text>
</comment>
<comment type="subcellular location">
    <subcellularLocation>
        <location evidence="3">Secreted</location>
    </subcellularLocation>
    <subcellularLocation>
        <location evidence="3">Host nucleus</location>
    </subcellularLocation>
</comment>
<comment type="domain">
    <text evidence="6">The RxLR-dEER motif acts to carry the protein into the host cell cytoplasm through binding to cell surface phosphatidylinositol-3-phosphate.</text>
</comment>
<comment type="similarity">
    <text evidence="5">Belongs to the RxLR effector family.</text>
</comment>
<proteinExistence type="evidence at transcript level"/>